<protein>
    <recommendedName>
        <fullName evidence="4">6-phosphogluconolactonase 4</fullName>
        <shortName evidence="4">6PGL</shortName>
        <ecNumber evidence="3">3.1.1.31</ecNumber>
    </recommendedName>
</protein>
<gene>
    <name evidence="4" type="primary">SOL4</name>
    <name type="ordered locus">YGR248W</name>
</gene>
<organism>
    <name type="scientific">Saccharomyces cerevisiae (strain ATCC 204508 / S288c)</name>
    <name type="common">Baker's yeast</name>
    <dbReference type="NCBI Taxonomy" id="559292"/>
    <lineage>
        <taxon>Eukaryota</taxon>
        <taxon>Fungi</taxon>
        <taxon>Dikarya</taxon>
        <taxon>Ascomycota</taxon>
        <taxon>Saccharomycotina</taxon>
        <taxon>Saccharomycetes</taxon>
        <taxon>Saccharomycetales</taxon>
        <taxon>Saccharomycetaceae</taxon>
        <taxon>Saccharomyces</taxon>
    </lineage>
</organism>
<dbReference type="EC" id="3.1.1.31" evidence="3"/>
<dbReference type="EMBL" id="Z73033">
    <property type="protein sequence ID" value="CAA97277.1"/>
    <property type="molecule type" value="Genomic_DNA"/>
</dbReference>
<dbReference type="EMBL" id="BK006941">
    <property type="protein sequence ID" value="DAA08339.1"/>
    <property type="molecule type" value="Genomic_DNA"/>
</dbReference>
<dbReference type="PIR" id="S64574">
    <property type="entry name" value="S64574"/>
</dbReference>
<dbReference type="RefSeq" id="NP_011764.3">
    <property type="nucleotide sequence ID" value="NM_001181377.3"/>
</dbReference>
<dbReference type="SMR" id="P53315"/>
<dbReference type="BioGRID" id="33499">
    <property type="interactions" value="73"/>
</dbReference>
<dbReference type="FunCoup" id="P53315">
    <property type="interactions" value="907"/>
</dbReference>
<dbReference type="IntAct" id="P53315">
    <property type="interactions" value="7"/>
</dbReference>
<dbReference type="MINT" id="P53315"/>
<dbReference type="STRING" id="4932.YGR248W"/>
<dbReference type="iPTMnet" id="P53315"/>
<dbReference type="PaxDb" id="4932-YGR248W"/>
<dbReference type="PeptideAtlas" id="P53315"/>
<dbReference type="TopDownProteomics" id="P53315"/>
<dbReference type="EnsemblFungi" id="YGR248W_mRNA">
    <property type="protein sequence ID" value="YGR248W"/>
    <property type="gene ID" value="YGR248W"/>
</dbReference>
<dbReference type="GeneID" id="853163"/>
<dbReference type="KEGG" id="sce:YGR248W"/>
<dbReference type="AGR" id="SGD:S000003480"/>
<dbReference type="SGD" id="S000003480">
    <property type="gene designation" value="SOL4"/>
</dbReference>
<dbReference type="VEuPathDB" id="FungiDB:YGR248W"/>
<dbReference type="eggNOG" id="KOG3147">
    <property type="taxonomic scope" value="Eukaryota"/>
</dbReference>
<dbReference type="GeneTree" id="ENSGT00550000075110"/>
<dbReference type="HOGENOM" id="CLU_053947_0_1_1"/>
<dbReference type="InParanoid" id="P53315"/>
<dbReference type="OMA" id="YQLFEFE"/>
<dbReference type="OrthoDB" id="432544at2759"/>
<dbReference type="BioCyc" id="YEAST:MONOMER3O-4047"/>
<dbReference type="UniPathway" id="UPA00115">
    <property type="reaction ID" value="UER00409"/>
</dbReference>
<dbReference type="BioGRID-ORCS" id="853163">
    <property type="hits" value="1 hit in 10 CRISPR screens"/>
</dbReference>
<dbReference type="PRO" id="PR:P53315"/>
<dbReference type="Proteomes" id="UP000002311">
    <property type="component" value="Chromosome VII"/>
</dbReference>
<dbReference type="RNAct" id="P53315">
    <property type="molecule type" value="protein"/>
</dbReference>
<dbReference type="GO" id="GO:0005737">
    <property type="term" value="C:cytoplasm"/>
    <property type="evidence" value="ECO:0007005"/>
    <property type="project" value="SGD"/>
</dbReference>
<dbReference type="GO" id="GO:0005829">
    <property type="term" value="C:cytosol"/>
    <property type="evidence" value="ECO:0000314"/>
    <property type="project" value="SGD"/>
</dbReference>
<dbReference type="GO" id="GO:0005634">
    <property type="term" value="C:nucleus"/>
    <property type="evidence" value="ECO:0007005"/>
    <property type="project" value="SGD"/>
</dbReference>
<dbReference type="GO" id="GO:0017057">
    <property type="term" value="F:6-phosphogluconolactonase activity"/>
    <property type="evidence" value="ECO:0000316"/>
    <property type="project" value="SGD"/>
</dbReference>
<dbReference type="GO" id="GO:0005975">
    <property type="term" value="P:carbohydrate metabolic process"/>
    <property type="evidence" value="ECO:0007669"/>
    <property type="project" value="InterPro"/>
</dbReference>
<dbReference type="GO" id="GO:0009051">
    <property type="term" value="P:pentose-phosphate shunt, oxidative branch"/>
    <property type="evidence" value="ECO:0000318"/>
    <property type="project" value="GO_Central"/>
</dbReference>
<dbReference type="CDD" id="cd01400">
    <property type="entry name" value="6PGL"/>
    <property type="match status" value="1"/>
</dbReference>
<dbReference type="FunFam" id="3.40.50.1360:FF:000005">
    <property type="entry name" value="6-phosphogluconolactonase"/>
    <property type="match status" value="1"/>
</dbReference>
<dbReference type="Gene3D" id="3.40.50.1360">
    <property type="match status" value="1"/>
</dbReference>
<dbReference type="InterPro" id="IPR005900">
    <property type="entry name" value="6-phosphogluconolactonase_DevB"/>
</dbReference>
<dbReference type="InterPro" id="IPR006148">
    <property type="entry name" value="Glc/Gal-6P_isomerase"/>
</dbReference>
<dbReference type="InterPro" id="IPR037171">
    <property type="entry name" value="NagB/RpiA_transferase-like"/>
</dbReference>
<dbReference type="InterPro" id="IPR039104">
    <property type="entry name" value="PGLS"/>
</dbReference>
<dbReference type="NCBIfam" id="TIGR01198">
    <property type="entry name" value="pgl"/>
    <property type="match status" value="1"/>
</dbReference>
<dbReference type="PANTHER" id="PTHR11054">
    <property type="entry name" value="6-PHOSPHOGLUCONOLACTONASE"/>
    <property type="match status" value="1"/>
</dbReference>
<dbReference type="PANTHER" id="PTHR11054:SF24">
    <property type="entry name" value="6-PHOSPHOGLUCONOLACTONASE 3-RELATED"/>
    <property type="match status" value="1"/>
</dbReference>
<dbReference type="Pfam" id="PF01182">
    <property type="entry name" value="Glucosamine_iso"/>
    <property type="match status" value="1"/>
</dbReference>
<dbReference type="SUPFAM" id="SSF100950">
    <property type="entry name" value="NagB/RpiA/CoA transferase-like"/>
    <property type="match status" value="1"/>
</dbReference>
<sequence length="255" mass="28448">MVKLQRFSEKKSLIHEFGKFILEKQESALTGDADAVFNIAISGGSMNQALYESLVNDKNIFPHIKWPQWRIFFCDERLVPFEDPQSNYGQFKKTVLDPLVHQGNQLNLGPTVYTINESLIGGGETANRKIAEEYASMLPASFDLILLGCGEDGHTCSLFPGVEFNYLVEEMDRKVLWCNNSPKAPKDRITFTLAVVAEAKSVCFLVRGAAKKAIMHDVLIVKNSELPSVLVNEMVGTKVTWFLDDEAGALIPENC</sequence>
<proteinExistence type="evidence at protein level"/>
<feature type="chain" id="PRO_0000090085" description="6-phosphogluconolactonase 4">
    <location>
        <begin position="1"/>
        <end position="255"/>
    </location>
</feature>
<keyword id="KW-0963">Cytoplasm</keyword>
<keyword id="KW-0378">Hydrolase</keyword>
<keyword id="KW-1185">Reference proteome</keyword>
<comment type="function">
    <text evidence="3">Involved in the pentose phosphate pathway via hydrolysis of 6-phosphogluconolactone to 6-phosphogluconate.</text>
</comment>
<comment type="catalytic activity">
    <reaction evidence="3">
        <text>6-phospho-D-glucono-1,5-lactone + H2O = 6-phospho-D-gluconate + H(+)</text>
        <dbReference type="Rhea" id="RHEA:12556"/>
        <dbReference type="ChEBI" id="CHEBI:15377"/>
        <dbReference type="ChEBI" id="CHEBI:15378"/>
        <dbReference type="ChEBI" id="CHEBI:57955"/>
        <dbReference type="ChEBI" id="CHEBI:58759"/>
        <dbReference type="EC" id="3.1.1.31"/>
    </reaction>
</comment>
<comment type="pathway">
    <text evidence="3">Carbohydrate degradation; pentose phosphate pathway; D-ribulose 5-phosphate from D-glucose 6-phosphate (oxidative stage): step 2/3.</text>
</comment>
<comment type="subcellular location">
    <subcellularLocation>
        <location evidence="1 3">Cytoplasm</location>
    </subcellularLocation>
</comment>
<comment type="miscellaneous">
    <text evidence="2">Present with 4320 molecules/cell in log phase SD medium.</text>
</comment>
<comment type="similarity">
    <text evidence="5">Belongs to the glucosamine/galactosamine-6-phosphate isomerase family. 6-phosphogluconolactonase subfamily.</text>
</comment>
<evidence type="ECO:0000269" key="1">
    <source>
    </source>
</evidence>
<evidence type="ECO:0000269" key="2">
    <source>
    </source>
</evidence>
<evidence type="ECO:0000269" key="3">
    <source>
    </source>
</evidence>
<evidence type="ECO:0000303" key="4">
    <source>
    </source>
</evidence>
<evidence type="ECO:0000305" key="5"/>
<accession>P53315</accession>
<accession>D6VV28</accession>
<reference key="1">
    <citation type="journal article" date="1997" name="Yeast">
        <title>Analysis of a 17.9 kb region from Saccharomyces cerevisiae chromosome VII reveals the presence of eight open reading frames, including BRF1 (TFIIIB70) and GCN5 genes.</title>
        <authorList>
            <person name="Feroli F."/>
            <person name="Carignani G."/>
            <person name="Pavanello A."/>
            <person name="Guerreiro P."/>
            <person name="Azevedo D."/>
            <person name="Rodrigues-Pousada C."/>
            <person name="Melchioretto P."/>
            <person name="Panzeri L."/>
            <person name="Agostoni Carbone M.L."/>
        </authorList>
    </citation>
    <scope>NUCLEOTIDE SEQUENCE [GENOMIC DNA]</scope>
    <source>
        <strain>ATCC 96604 / S288c / FY1679</strain>
    </source>
</reference>
<reference key="2">
    <citation type="journal article" date="1997" name="Nature">
        <title>The nucleotide sequence of Saccharomyces cerevisiae chromosome VII.</title>
        <authorList>
            <person name="Tettelin H."/>
            <person name="Agostoni-Carbone M.L."/>
            <person name="Albermann K."/>
            <person name="Albers M."/>
            <person name="Arroyo J."/>
            <person name="Backes U."/>
            <person name="Barreiros T."/>
            <person name="Bertani I."/>
            <person name="Bjourson A.J."/>
            <person name="Brueckner M."/>
            <person name="Bruschi C.V."/>
            <person name="Carignani G."/>
            <person name="Castagnoli L."/>
            <person name="Cerdan E."/>
            <person name="Clemente M.L."/>
            <person name="Coblenz A."/>
            <person name="Coglievina M."/>
            <person name="Coissac E."/>
            <person name="Defoor E."/>
            <person name="Del Bino S."/>
            <person name="Delius H."/>
            <person name="Delneri D."/>
            <person name="de Wergifosse P."/>
            <person name="Dujon B."/>
            <person name="Durand P."/>
            <person name="Entian K.-D."/>
            <person name="Eraso P."/>
            <person name="Escribano V."/>
            <person name="Fabiani L."/>
            <person name="Fartmann B."/>
            <person name="Feroli F."/>
            <person name="Feuermann M."/>
            <person name="Frontali L."/>
            <person name="Garcia-Gonzalez M."/>
            <person name="Garcia-Saez M.I."/>
            <person name="Goffeau A."/>
            <person name="Guerreiro P."/>
            <person name="Hani J."/>
            <person name="Hansen M."/>
            <person name="Hebling U."/>
            <person name="Hernandez K."/>
            <person name="Heumann K."/>
            <person name="Hilger F."/>
            <person name="Hofmann B."/>
            <person name="Indge K.J."/>
            <person name="James C.M."/>
            <person name="Klima R."/>
            <person name="Koetter P."/>
            <person name="Kramer B."/>
            <person name="Kramer W."/>
            <person name="Lauquin G."/>
            <person name="Leuther H."/>
            <person name="Louis E.J."/>
            <person name="Maillier E."/>
            <person name="Marconi A."/>
            <person name="Martegani E."/>
            <person name="Mazon M.J."/>
            <person name="Mazzoni C."/>
            <person name="McReynolds A.D.K."/>
            <person name="Melchioretto P."/>
            <person name="Mewes H.-W."/>
            <person name="Minenkova O."/>
            <person name="Mueller-Auer S."/>
            <person name="Nawrocki A."/>
            <person name="Netter P."/>
            <person name="Neu R."/>
            <person name="Nombela C."/>
            <person name="Oliver S.G."/>
            <person name="Panzeri L."/>
            <person name="Paoluzi S."/>
            <person name="Plevani P."/>
            <person name="Portetelle D."/>
            <person name="Portillo F."/>
            <person name="Potier S."/>
            <person name="Purnelle B."/>
            <person name="Rieger M."/>
            <person name="Riles L."/>
            <person name="Rinaldi T."/>
            <person name="Robben J."/>
            <person name="Rodrigues-Pousada C."/>
            <person name="Rodriguez-Belmonte E."/>
            <person name="Rodriguez-Torres A.M."/>
            <person name="Rose M."/>
            <person name="Ruzzi M."/>
            <person name="Saliola M."/>
            <person name="Sanchez-Perez M."/>
            <person name="Schaefer B."/>
            <person name="Schaefer M."/>
            <person name="Scharfe M."/>
            <person name="Schmidheini T."/>
            <person name="Schreer A."/>
            <person name="Skala J."/>
            <person name="Souciet J.-L."/>
            <person name="Steensma H.Y."/>
            <person name="Talla E."/>
            <person name="Thierry A."/>
            <person name="Vandenbol M."/>
            <person name="van der Aart Q.J.M."/>
            <person name="Van Dyck L."/>
            <person name="Vanoni M."/>
            <person name="Verhasselt P."/>
            <person name="Voet M."/>
            <person name="Volckaert G."/>
            <person name="Wambutt R."/>
            <person name="Watson M.D."/>
            <person name="Weber N."/>
            <person name="Wedler E."/>
            <person name="Wedler H."/>
            <person name="Wipfli P."/>
            <person name="Wolf K."/>
            <person name="Wright L.F."/>
            <person name="Zaccaria P."/>
            <person name="Zimmermann M."/>
            <person name="Zollner A."/>
            <person name="Kleine K."/>
        </authorList>
    </citation>
    <scope>NUCLEOTIDE SEQUENCE [LARGE SCALE GENOMIC DNA]</scope>
    <source>
        <strain>ATCC 204508 / S288c</strain>
    </source>
</reference>
<reference key="3">
    <citation type="journal article" date="2014" name="G3 (Bethesda)">
        <title>The reference genome sequence of Saccharomyces cerevisiae: Then and now.</title>
        <authorList>
            <person name="Engel S.R."/>
            <person name="Dietrich F.S."/>
            <person name="Fisk D.G."/>
            <person name="Binkley G."/>
            <person name="Balakrishnan R."/>
            <person name="Costanzo M.C."/>
            <person name="Dwight S.S."/>
            <person name="Hitz B.C."/>
            <person name="Karra K."/>
            <person name="Nash R.S."/>
            <person name="Weng S."/>
            <person name="Wong E.D."/>
            <person name="Lloyd P."/>
            <person name="Skrzypek M.S."/>
            <person name="Miyasato S.R."/>
            <person name="Simison M."/>
            <person name="Cherry J.M."/>
        </authorList>
    </citation>
    <scope>GENOME REANNOTATION</scope>
    <source>
        <strain>ATCC 204508 / S288c</strain>
    </source>
</reference>
<reference key="4">
    <citation type="journal article" date="2003" name="Nature">
        <title>Global analysis of protein localization in budding yeast.</title>
        <authorList>
            <person name="Huh W.-K."/>
            <person name="Falvo J.V."/>
            <person name="Gerke L.C."/>
            <person name="Carroll A.S."/>
            <person name="Howson R.W."/>
            <person name="Weissman J.S."/>
            <person name="O'Shea E.K."/>
        </authorList>
    </citation>
    <scope>SUBCELLULAR LOCATION [LARGE SCALE ANALYSIS]</scope>
</reference>
<reference key="5">
    <citation type="journal article" date="2003" name="Nature">
        <title>Global analysis of protein expression in yeast.</title>
        <authorList>
            <person name="Ghaemmaghami S."/>
            <person name="Huh W.-K."/>
            <person name="Bower K."/>
            <person name="Howson R.W."/>
            <person name="Belle A."/>
            <person name="Dephoure N."/>
            <person name="O'Shea E.K."/>
            <person name="Weissman J.S."/>
        </authorList>
    </citation>
    <scope>LEVEL OF PROTEIN EXPRESSION [LARGE SCALE ANALYSIS]</scope>
</reference>
<reference key="6">
    <citation type="journal article" date="2004" name="Genetics">
        <title>Division of labor among the yeast Sol proteins implicated in tRNA nuclear export and carbohydrate metabolism.</title>
        <authorList>
            <person name="Stanford D.R."/>
            <person name="Whitney M.L."/>
            <person name="Hurto R.L."/>
            <person name="Eisaman D.M."/>
            <person name="Shen W.-C."/>
            <person name="Hopper A.K."/>
        </authorList>
    </citation>
    <scope>FUNCTION</scope>
    <scope>CATALYTIC ACTIVITY</scope>
    <scope>SUBCELLULAR LOCATION</scope>
    <scope>PATHWAY</scope>
</reference>
<name>SOL4_YEAST</name>